<feature type="chain" id="PRO_0000343053" description="Golgi apparatus membrane protein TVP23">
    <location>
        <begin position="1"/>
        <end position="236"/>
    </location>
</feature>
<feature type="transmembrane region" description="Helical" evidence="2">
    <location>
        <begin position="63"/>
        <end position="83"/>
    </location>
</feature>
<feature type="transmembrane region" description="Helical" evidence="2">
    <location>
        <begin position="89"/>
        <end position="109"/>
    </location>
</feature>
<feature type="transmembrane region" description="Helical" evidence="2">
    <location>
        <begin position="157"/>
        <end position="176"/>
    </location>
</feature>
<feature type="transmembrane region" description="Helical" evidence="2">
    <location>
        <begin position="180"/>
        <end position="202"/>
    </location>
</feature>
<feature type="region of interest" description="Disordered" evidence="3">
    <location>
        <begin position="1"/>
        <end position="39"/>
    </location>
</feature>
<sequence>MSSQYTAIESDVPQAQPAGATGPMDNQMGGEPNSGQINSDPSSWTWIQRLKQSSHPVALLFYIGFRILPIEIYIFGNFFIGFITKKNRFILHFIVLVLLISGDFWNLKNVAGRLLVGLRWWNEVNFIESSSTGEFENVWVFESADPSRYINPIDSKVFWTLLYGQPVAWIVLGILAVLKFEFLYLILILIAIFLSFTNALAFTKCDKFGKANNLATGFLSRASGTILSRLNPFASR</sequence>
<reference key="1">
    <citation type="journal article" date="2009" name="Nature">
        <title>Evolution of pathogenicity and sexual reproduction in eight Candida genomes.</title>
        <authorList>
            <person name="Butler G."/>
            <person name="Rasmussen M.D."/>
            <person name="Lin M.F."/>
            <person name="Santos M.A.S."/>
            <person name="Sakthikumar S."/>
            <person name="Munro C.A."/>
            <person name="Rheinbay E."/>
            <person name="Grabherr M."/>
            <person name="Forche A."/>
            <person name="Reedy J.L."/>
            <person name="Agrafioti I."/>
            <person name="Arnaud M.B."/>
            <person name="Bates S."/>
            <person name="Brown A.J.P."/>
            <person name="Brunke S."/>
            <person name="Costanzo M.C."/>
            <person name="Fitzpatrick D.A."/>
            <person name="de Groot P.W.J."/>
            <person name="Harris D."/>
            <person name="Hoyer L.L."/>
            <person name="Hube B."/>
            <person name="Klis F.M."/>
            <person name="Kodira C."/>
            <person name="Lennard N."/>
            <person name="Logue M.E."/>
            <person name="Martin R."/>
            <person name="Neiman A.M."/>
            <person name="Nikolaou E."/>
            <person name="Quail M.A."/>
            <person name="Quinn J."/>
            <person name="Santos M.C."/>
            <person name="Schmitzberger F.F."/>
            <person name="Sherlock G."/>
            <person name="Shah P."/>
            <person name="Silverstein K.A.T."/>
            <person name="Skrzypek M.S."/>
            <person name="Soll D."/>
            <person name="Staggs R."/>
            <person name="Stansfield I."/>
            <person name="Stumpf M.P.H."/>
            <person name="Sudbery P.E."/>
            <person name="Srikantha T."/>
            <person name="Zeng Q."/>
            <person name="Berman J."/>
            <person name="Berriman M."/>
            <person name="Heitman J."/>
            <person name="Gow N.A.R."/>
            <person name="Lorenz M.C."/>
            <person name="Birren B.W."/>
            <person name="Kellis M."/>
            <person name="Cuomo C.A."/>
        </authorList>
    </citation>
    <scope>NUCLEOTIDE SEQUENCE [LARGE SCALE GENOMIC DNA]</scope>
    <source>
        <strain>ATCC 6260 / CBS 566 / DSM 6381 / JCM 1539 / NBRC 10279 / NRRL Y-324</strain>
    </source>
</reference>
<dbReference type="EMBL" id="CH408162">
    <property type="protein sequence ID" value="EDK41751.2"/>
    <property type="molecule type" value="Genomic_DNA"/>
</dbReference>
<dbReference type="RefSeq" id="XP_001482086.1">
    <property type="nucleotide sequence ID" value="XM_001482036.1"/>
</dbReference>
<dbReference type="FunCoup" id="A5DRE8">
    <property type="interactions" value="403"/>
</dbReference>
<dbReference type="STRING" id="294746.A5DRE8"/>
<dbReference type="GeneID" id="5123922"/>
<dbReference type="KEGG" id="pgu:PGUG_05849"/>
<dbReference type="VEuPathDB" id="FungiDB:PGUG_05849"/>
<dbReference type="eggNOG" id="KOG3195">
    <property type="taxonomic scope" value="Eukaryota"/>
</dbReference>
<dbReference type="HOGENOM" id="CLU_074845_0_0_1"/>
<dbReference type="InParanoid" id="A5DRE8"/>
<dbReference type="OMA" id="FEWMIVA"/>
<dbReference type="OrthoDB" id="2151161at2759"/>
<dbReference type="Proteomes" id="UP000001997">
    <property type="component" value="Unassembled WGS sequence"/>
</dbReference>
<dbReference type="GO" id="GO:0000139">
    <property type="term" value="C:Golgi membrane"/>
    <property type="evidence" value="ECO:0007669"/>
    <property type="project" value="UniProtKB-SubCell"/>
</dbReference>
<dbReference type="GO" id="GO:0009306">
    <property type="term" value="P:protein secretion"/>
    <property type="evidence" value="ECO:0007669"/>
    <property type="project" value="TreeGrafter"/>
</dbReference>
<dbReference type="GO" id="GO:0016192">
    <property type="term" value="P:vesicle-mediated transport"/>
    <property type="evidence" value="ECO:0007669"/>
    <property type="project" value="TreeGrafter"/>
</dbReference>
<dbReference type="InterPro" id="IPR008564">
    <property type="entry name" value="TVP23-like"/>
</dbReference>
<dbReference type="PANTHER" id="PTHR13019">
    <property type="entry name" value="GOLGI APPARATUS MEMBRANE PROTEIN TVP23"/>
    <property type="match status" value="1"/>
</dbReference>
<dbReference type="PANTHER" id="PTHR13019:SF7">
    <property type="entry name" value="GOLGI APPARATUS MEMBRANE PROTEIN TVP23"/>
    <property type="match status" value="1"/>
</dbReference>
<dbReference type="Pfam" id="PF05832">
    <property type="entry name" value="DUF846"/>
    <property type="match status" value="1"/>
</dbReference>
<name>TVP23_PICGU</name>
<organism>
    <name type="scientific">Meyerozyma guilliermondii (strain ATCC 6260 / CBS 566 / DSM 6381 / JCM 1539 / NBRC 10279 / NRRL Y-324)</name>
    <name type="common">Yeast</name>
    <name type="synonym">Candida guilliermondii</name>
    <dbReference type="NCBI Taxonomy" id="294746"/>
    <lineage>
        <taxon>Eukaryota</taxon>
        <taxon>Fungi</taxon>
        <taxon>Dikarya</taxon>
        <taxon>Ascomycota</taxon>
        <taxon>Saccharomycotina</taxon>
        <taxon>Pichiomycetes</taxon>
        <taxon>Debaryomycetaceae</taxon>
        <taxon>Meyerozyma</taxon>
    </lineage>
</organism>
<proteinExistence type="inferred from homology"/>
<comment type="function">
    <text evidence="1">Golgi membrane protein involved in vesicular trafficking.</text>
</comment>
<comment type="subcellular location">
    <subcellularLocation>
        <location evidence="1">Golgi apparatus membrane</location>
        <topology evidence="1">Multi-pass membrane protein</topology>
    </subcellularLocation>
</comment>
<comment type="similarity">
    <text evidence="4">Belongs to the TVP23 family.</text>
</comment>
<protein>
    <recommendedName>
        <fullName>Golgi apparatus membrane protein TVP23</fullName>
    </recommendedName>
</protein>
<keyword id="KW-0333">Golgi apparatus</keyword>
<keyword id="KW-0472">Membrane</keyword>
<keyword id="KW-1185">Reference proteome</keyword>
<keyword id="KW-0812">Transmembrane</keyword>
<keyword id="KW-1133">Transmembrane helix</keyword>
<evidence type="ECO:0000250" key="1"/>
<evidence type="ECO:0000255" key="2"/>
<evidence type="ECO:0000256" key="3">
    <source>
        <dbReference type="SAM" id="MobiDB-lite"/>
    </source>
</evidence>
<evidence type="ECO:0000305" key="4"/>
<gene>
    <name type="primary">TVP23</name>
    <name type="ORF">PGUG_05849</name>
</gene>
<accession>A5DRE8</accession>